<evidence type="ECO:0000250" key="1"/>
<evidence type="ECO:0000250" key="2">
    <source>
        <dbReference type="UniProtKB" id="P04608"/>
    </source>
</evidence>
<evidence type="ECO:0000256" key="3">
    <source>
        <dbReference type="SAM" id="MobiDB-lite"/>
    </source>
</evidence>
<evidence type="ECO:0000305" key="4"/>
<proteinExistence type="inferred from homology"/>
<keyword id="KW-0010">Activator</keyword>
<keyword id="KW-0014">AIDS</keyword>
<keyword id="KW-0025">Alternative splicing</keyword>
<keyword id="KW-1048">Host nucleus</keyword>
<keyword id="KW-0945">Host-virus interaction</keyword>
<keyword id="KW-0597">Phosphoprotein</keyword>
<keyword id="KW-1185">Reference proteome</keyword>
<keyword id="KW-0694">RNA-binding</keyword>
<keyword id="KW-0804">Transcription</keyword>
<keyword id="KW-0805">Transcription regulation</keyword>
<name>TAT_HV2BE</name>
<feature type="chain" id="PRO_0000085367" description="Protein Tat">
    <location>
        <begin position="1"/>
        <end position="130"/>
    </location>
</feature>
<feature type="region of interest" description="Disordered" evidence="3">
    <location>
        <begin position="1"/>
        <end position="28"/>
    </location>
</feature>
<feature type="region of interest" description="Cysteine-rich" evidence="1">
    <location>
        <begin position="50"/>
        <end position="66"/>
    </location>
</feature>
<feature type="region of interest" description="Core" evidence="1">
    <location>
        <begin position="67"/>
        <end position="77"/>
    </location>
</feature>
<feature type="region of interest" description="Disordered" evidence="3">
    <location>
        <begin position="77"/>
        <end position="130"/>
    </location>
</feature>
<feature type="short sequence motif" description="Nuclear localization signal, and RNA-binding (TAR)" evidence="1">
    <location>
        <begin position="78"/>
        <end position="90"/>
    </location>
</feature>
<feature type="compositionally biased region" description="Basic residues" evidence="3">
    <location>
        <begin position="79"/>
        <end position="90"/>
    </location>
</feature>
<feature type="compositionally biased region" description="Polar residues" evidence="3">
    <location>
        <begin position="100"/>
        <end position="109"/>
    </location>
</feature>
<feature type="modified residue" description="Phosphothreonine; by host CDK9" evidence="1">
    <location>
        <position position="85"/>
    </location>
</feature>
<feature type="modified residue" description="Phosphothreonine; by host CDK9" evidence="1">
    <location>
        <position position="89"/>
    </location>
</feature>
<feature type="splice variant" id="VSP_022437" description="In isoform Short." evidence="4">
    <location>
        <begin position="100"/>
        <end position="130"/>
    </location>
</feature>
<comment type="function">
    <text evidence="2">Transcriptional activator that increases RNA Pol II processivity, thereby increasing the level of full-length viral transcripts. Recognizes a hairpin structure at the 5'-LTR of the nascent viral mRNAs referred to as the transactivation responsive RNA element (TAR) and recruits the cyclin T1-CDK9 complex (P-TEFb complex) that will in turn hyperphosphorylate the RNA polymerase II to allow efficient elongation. The CDK9 component of P-TEFb and other Tat-activated kinases hyperphosphorylate the C-terminus of RNA Pol II that becomes stabilized and much more processive.</text>
</comment>
<comment type="function">
    <text evidence="1">Extracellular circulating Tat can be endocytosed by surrounding uninfected cells via the binding to several surface receptors. Endosomal low pH allows Tat to cross the endosome membrane to enter the cytosol and eventually further translocate into the nucleus, thereby inducing severe cell dysfunctions ranging from cell activation to cell death. Through (By similarity).</text>
</comment>
<comment type="subunit">
    <text evidence="1">Interacts with host CCNT1. Associates with the P-TEFb complex composed at least of Tat, P-TEFb (CDK9 and CCNT1), TAR RNA, RNA Pol II. Interacts with CCNT2; the resulting complex is unable to bind to TAR RNA (By similarity).</text>
</comment>
<comment type="subcellular location">
    <subcellularLocation>
        <location evidence="1">Host nucleus</location>
        <location evidence="1">Host nucleolus</location>
    </subcellularLocation>
</comment>
<comment type="alternative products">
    <event type="alternative splicing"/>
    <isoform>
        <id>P18098-1</id>
        <name>Long</name>
        <sequence type="displayed"/>
    </isoform>
    <isoform>
        <id>P18098-2</id>
        <name>Short</name>
        <sequence type="described" ref="VSP_022437"/>
    </isoform>
</comment>
<comment type="domain">
    <text evidence="1">The Arg-rich RNA-binding region binds the TAR RNA. This region also mediates the nuclear localization (By similarity).</text>
</comment>
<comment type="PTM">
    <text evidence="1">The phosphorylation by CDK9 does not seem to be important for transactivation function.</text>
</comment>
<comment type="miscellaneous">
    <text>This isolate is from a German AIDS patient (with predominantly neurological complications) who was probably infected in Mali.</text>
</comment>
<comment type="miscellaneous">
    <molecule>Isoform Short</molecule>
    <text evidence="4">Expressed in the late stage of the infection cycle, when unspliced viral RNAs are exported to the cytoplasm by the viral Rev protein.</text>
</comment>
<comment type="similarity">
    <text evidence="4">Belongs to the lentiviruses Tat family.</text>
</comment>
<organism>
    <name type="scientific">Human immunodeficiency virus type 2 subtype A (isolate BEN)</name>
    <name type="common">HIV-2</name>
    <dbReference type="NCBI Taxonomy" id="11714"/>
    <lineage>
        <taxon>Viruses</taxon>
        <taxon>Riboviria</taxon>
        <taxon>Pararnavirae</taxon>
        <taxon>Artverviricota</taxon>
        <taxon>Revtraviricetes</taxon>
        <taxon>Ortervirales</taxon>
        <taxon>Retroviridae</taxon>
        <taxon>Orthoretrovirinae</taxon>
        <taxon>Lentivirus</taxon>
        <taxon>Human immunodeficiency virus 2</taxon>
    </lineage>
</organism>
<sequence length="130" mass="14463">METPLKAPESSLKPYNEPSSCTSERDVTAQELAKQGEELLAQLHRPLEPCTNKCYCKRCSFHCQLCFSKKGLGISYERKGRRRRTPRKTKTPSPSAPDKSISTRTGDSQPTKEQKKTSEATVVTTCGLGQ</sequence>
<reference key="1">
    <citation type="journal article" date="1990" name="Virology">
        <title>A novel proviral clone of HIV-2: biological and phylogenetic relationship to other primate immunodeficiency viruses.</title>
        <authorList>
            <person name="Kirchhoff F."/>
            <person name="Jentsch K."/>
            <person name="Bachmann B."/>
            <person name="Stuke A."/>
            <person name="Laloux C."/>
            <person name="Lueke W."/>
            <person name="Stahl-Henning C."/>
            <person name="Schneider J."/>
            <person name="Nieselt K."/>
            <person name="Eigen M."/>
            <person name="Hunsmann G."/>
        </authorList>
    </citation>
    <scope>NUCLEOTIDE SEQUENCE [GENOMIC DNA]</scope>
</reference>
<reference key="2">
    <citation type="journal article" date="2005" name="Microbes Infect.">
        <title>Decoding Tat: the biology of HIV Tat posttranslational modifications.</title>
        <authorList>
            <person name="Hetzer C."/>
            <person name="Dormeyer W."/>
            <person name="Schnolzer M."/>
            <person name="Ott M."/>
        </authorList>
    </citation>
    <scope>REVIEW</scope>
    <scope>ALTERNATIVE SPLICING</scope>
</reference>
<protein>
    <recommendedName>
        <fullName>Protein Tat</fullName>
    </recommendedName>
    <alternativeName>
        <fullName>Transactivating regulatory protein</fullName>
    </alternativeName>
</protein>
<organismHost>
    <name type="scientific">Homo sapiens</name>
    <name type="common">Human</name>
    <dbReference type="NCBI Taxonomy" id="9606"/>
</organismHost>
<dbReference type="EMBL" id="M30502">
    <property type="protein sequence ID" value="AAB00741.1"/>
    <property type="molecule type" value="Genomic_DNA"/>
</dbReference>
<dbReference type="RefSeq" id="NP_056842.1">
    <property type="nucleotide sequence ID" value="NC_001722.1"/>
</dbReference>
<dbReference type="BioGRID" id="1205549">
    <property type="interactions" value="2"/>
</dbReference>
<dbReference type="KEGG" id="vg:1724713"/>
<dbReference type="Proteomes" id="UP000002242">
    <property type="component" value="Segment"/>
</dbReference>
<dbReference type="GO" id="GO:0044196">
    <property type="term" value="C:host cell nucleolus"/>
    <property type="evidence" value="ECO:0007669"/>
    <property type="project" value="UniProtKB-SubCell"/>
</dbReference>
<dbReference type="GO" id="GO:0003723">
    <property type="term" value="F:RNA binding"/>
    <property type="evidence" value="ECO:0007669"/>
    <property type="project" value="UniProtKB-KW"/>
</dbReference>
<dbReference type="GO" id="GO:0001070">
    <property type="term" value="F:RNA-binding transcription regulator activity"/>
    <property type="evidence" value="ECO:0007669"/>
    <property type="project" value="InterPro"/>
</dbReference>
<dbReference type="GO" id="GO:0050434">
    <property type="term" value="P:positive regulation of viral transcription"/>
    <property type="evidence" value="ECO:0007669"/>
    <property type="project" value="InterPro"/>
</dbReference>
<dbReference type="Gene3D" id="4.10.20.10">
    <property type="entry name" value="Tat domain"/>
    <property type="match status" value="1"/>
</dbReference>
<dbReference type="InterPro" id="IPR001831">
    <property type="entry name" value="IV_Tat"/>
</dbReference>
<dbReference type="InterPro" id="IPR036963">
    <property type="entry name" value="Tat_dom_sf"/>
</dbReference>
<dbReference type="Pfam" id="PF00539">
    <property type="entry name" value="Tat"/>
    <property type="match status" value="1"/>
</dbReference>
<dbReference type="PRINTS" id="PR00055">
    <property type="entry name" value="HIVTATDOMAIN"/>
</dbReference>
<gene>
    <name type="primary">tat</name>
</gene>
<accession>P18098</accession>